<protein>
    <recommendedName>
        <fullName>Protein CbbY</fullName>
    </recommendedName>
</protein>
<gene>
    <name type="primary">cbbY</name>
</gene>
<proteinExistence type="inferred from homology"/>
<evidence type="ECO:0000305" key="1"/>
<accession>O33513</accession>
<sequence>MELKALIFDVDGTLAETEEVHRQAFNETFAAQGLDWYWSKEDYRTLLRTTGGKERMAKHRENLGSGPSDAKIADLHKAKTQRYVEIIASGQVGLLPGVAELIDRAKASGLRLAIATTTTRANVDALIAATFSKPAGDIFEVIAAGDEVAQKKPAPDVYLRALQGLGLPPAACLAFEDSRAGLASARAAGLRVVLTPSEYTRGDDFSAADWRIPDLSAAATQAIPELP</sequence>
<comment type="similarity">
    <text evidence="1">Belongs to the HAD-like hydrolase superfamily. CbbY/CbbZ/Gph/YieH family.</text>
</comment>
<dbReference type="EMBL" id="U23145">
    <property type="protein sequence ID" value="AAB82052.1"/>
    <property type="molecule type" value="Genomic_DNA"/>
</dbReference>
<dbReference type="PIR" id="T10510">
    <property type="entry name" value="T10510"/>
</dbReference>
<dbReference type="RefSeq" id="WP_055208341.1">
    <property type="nucleotide sequence ID" value="NZ_CP061202.1"/>
</dbReference>
<dbReference type="SMR" id="O33513"/>
<dbReference type="GO" id="GO:0016787">
    <property type="term" value="F:hydrolase activity"/>
    <property type="evidence" value="ECO:0007669"/>
    <property type="project" value="InterPro"/>
</dbReference>
<dbReference type="CDD" id="cd07528">
    <property type="entry name" value="HAD_CbbY-like"/>
    <property type="match status" value="1"/>
</dbReference>
<dbReference type="Gene3D" id="3.40.50.1000">
    <property type="entry name" value="HAD superfamily/HAD-like"/>
    <property type="match status" value="1"/>
</dbReference>
<dbReference type="Gene3D" id="1.10.150.240">
    <property type="entry name" value="Putative phosphatase, domain 2"/>
    <property type="match status" value="1"/>
</dbReference>
<dbReference type="InterPro" id="IPR044999">
    <property type="entry name" value="CbbY-like"/>
</dbReference>
<dbReference type="InterPro" id="IPR036412">
    <property type="entry name" value="HAD-like_sf"/>
</dbReference>
<dbReference type="InterPro" id="IPR006439">
    <property type="entry name" value="HAD-SF_hydro_IA"/>
</dbReference>
<dbReference type="InterPro" id="IPR023214">
    <property type="entry name" value="HAD_sf"/>
</dbReference>
<dbReference type="InterPro" id="IPR023198">
    <property type="entry name" value="PGP-like_dom2"/>
</dbReference>
<dbReference type="NCBIfam" id="TIGR01509">
    <property type="entry name" value="HAD-SF-IA-v3"/>
    <property type="match status" value="1"/>
</dbReference>
<dbReference type="PANTHER" id="PTHR42896:SF2">
    <property type="entry name" value="CBBY-LIKE PROTEIN"/>
    <property type="match status" value="1"/>
</dbReference>
<dbReference type="PANTHER" id="PTHR42896">
    <property type="entry name" value="XYLULOSE-1,5-BISPHOSPHATE (XUBP) PHOSPHATASE"/>
    <property type="match status" value="1"/>
</dbReference>
<dbReference type="Pfam" id="PF00702">
    <property type="entry name" value="Hydrolase"/>
    <property type="match status" value="1"/>
</dbReference>
<dbReference type="PRINTS" id="PR00413">
    <property type="entry name" value="HADHALOGNASE"/>
</dbReference>
<dbReference type="SFLD" id="SFLDS00003">
    <property type="entry name" value="Haloacid_Dehalogenase"/>
    <property type="match status" value="1"/>
</dbReference>
<dbReference type="SFLD" id="SFLDF00035">
    <property type="entry name" value="phosphoglycolate_phosphatase"/>
    <property type="match status" value="1"/>
</dbReference>
<dbReference type="SUPFAM" id="SSF56784">
    <property type="entry name" value="HAD-like"/>
    <property type="match status" value="1"/>
</dbReference>
<reference key="1">
    <citation type="submission" date="1995-04" db="EMBL/GenBank/DDBJ databases">
        <authorList>
            <person name="Larimer F.W."/>
            <person name="Lu T.-Y.S."/>
            <person name="Buley D.M."/>
        </authorList>
    </citation>
    <scope>NUCLEOTIDE SEQUENCE [GENOMIC DNA]</scope>
    <source>
        <strain>ATCC 11166 / DSM 1710 / CCUG 31484 / JCM 21090 / LMG 2962 / NBRC 16435 / NCIMB 8254 / ATH 2.3.1</strain>
    </source>
</reference>
<feature type="chain" id="PRO_0000108056" description="Protein CbbY">
    <location>
        <begin position="1"/>
        <end position="227"/>
    </location>
</feature>
<name>CBBY_RHOCA</name>
<organism>
    <name type="scientific">Rhodobacter capsulatus</name>
    <name type="common">Rhodopseudomonas capsulata</name>
    <dbReference type="NCBI Taxonomy" id="1061"/>
    <lineage>
        <taxon>Bacteria</taxon>
        <taxon>Pseudomonadati</taxon>
        <taxon>Pseudomonadota</taxon>
        <taxon>Alphaproteobacteria</taxon>
        <taxon>Rhodobacterales</taxon>
        <taxon>Rhodobacter group</taxon>
        <taxon>Rhodobacter</taxon>
    </lineage>
</organism>